<sequence length="347" mass="38922">MLIKQGDRLINTRNWSELVKPEQISRDGEVSDTMYGKFVCEPLERGYATTIGNAMRRVLLSSLQGAAFVAVKISGVQHEFTTIPGVLEDVTDVVLNLKQVRLAMDTEEPQYLELKVDKRGAITAGDVRTNQHVMVLNPDQHIATLTEDIELTFELEVRMGKGYVPADMHEGLSEEIGLIKLDASFSPVRKVAYTVEQARVGQMTNYDKLILEVWTDGSVSPEDAIAYSAKIIKDQISVFINFDERISGENSNGSADSGEFNEHLFKSIDELELSVRATNCLKSANIALVGELVQKSENEMLKTKNFGRKSLDEIRRVLGDMGLDFGTKVDGFEKKYQEWKRKQQHEA</sequence>
<keyword id="KW-0240">DNA-directed RNA polymerase</keyword>
<keyword id="KW-0548">Nucleotidyltransferase</keyword>
<keyword id="KW-0804">Transcription</keyword>
<keyword id="KW-0808">Transferase</keyword>
<comment type="function">
    <text evidence="1">DNA-dependent RNA polymerase catalyzes the transcription of DNA into RNA using the four ribonucleoside triphosphates as substrates.</text>
</comment>
<comment type="catalytic activity">
    <reaction evidence="1">
        <text>RNA(n) + a ribonucleoside 5'-triphosphate = RNA(n+1) + diphosphate</text>
        <dbReference type="Rhea" id="RHEA:21248"/>
        <dbReference type="Rhea" id="RHEA-COMP:14527"/>
        <dbReference type="Rhea" id="RHEA-COMP:17342"/>
        <dbReference type="ChEBI" id="CHEBI:33019"/>
        <dbReference type="ChEBI" id="CHEBI:61557"/>
        <dbReference type="ChEBI" id="CHEBI:140395"/>
        <dbReference type="EC" id="2.7.7.6"/>
    </reaction>
</comment>
<comment type="subunit">
    <text evidence="1">Homodimer. The RNAP catalytic core consists of 2 alpha, 1 beta, 1 beta' and 1 omega subunit. When a sigma factor is associated with the core the holoenzyme is formed, which can initiate transcription.</text>
</comment>
<comment type="domain">
    <text evidence="1">The N-terminal domain is essential for RNAP assembly and basal transcription, whereas the C-terminal domain is involved in interaction with transcriptional regulators and with upstream promoter elements.</text>
</comment>
<comment type="similarity">
    <text evidence="1">Belongs to the RNA polymerase alpha chain family.</text>
</comment>
<dbReference type="EC" id="2.7.7.6" evidence="1"/>
<dbReference type="EMBL" id="CP000527">
    <property type="protein sequence ID" value="ABM28756.1"/>
    <property type="molecule type" value="Genomic_DNA"/>
</dbReference>
<dbReference type="RefSeq" id="WP_010938624.1">
    <property type="nucleotide sequence ID" value="NC_008751.1"/>
</dbReference>
<dbReference type="SMR" id="A1VE90"/>
<dbReference type="KEGG" id="dvl:Dvul_1739"/>
<dbReference type="HOGENOM" id="CLU_053084_0_1_7"/>
<dbReference type="Proteomes" id="UP000009173">
    <property type="component" value="Chromosome"/>
</dbReference>
<dbReference type="GO" id="GO:0005737">
    <property type="term" value="C:cytoplasm"/>
    <property type="evidence" value="ECO:0007669"/>
    <property type="project" value="UniProtKB-ARBA"/>
</dbReference>
<dbReference type="GO" id="GO:0000428">
    <property type="term" value="C:DNA-directed RNA polymerase complex"/>
    <property type="evidence" value="ECO:0007669"/>
    <property type="project" value="UniProtKB-KW"/>
</dbReference>
<dbReference type="GO" id="GO:0003677">
    <property type="term" value="F:DNA binding"/>
    <property type="evidence" value="ECO:0007669"/>
    <property type="project" value="UniProtKB-UniRule"/>
</dbReference>
<dbReference type="GO" id="GO:0003899">
    <property type="term" value="F:DNA-directed RNA polymerase activity"/>
    <property type="evidence" value="ECO:0007669"/>
    <property type="project" value="UniProtKB-UniRule"/>
</dbReference>
<dbReference type="GO" id="GO:0046983">
    <property type="term" value="F:protein dimerization activity"/>
    <property type="evidence" value="ECO:0007669"/>
    <property type="project" value="InterPro"/>
</dbReference>
<dbReference type="GO" id="GO:0006351">
    <property type="term" value="P:DNA-templated transcription"/>
    <property type="evidence" value="ECO:0007669"/>
    <property type="project" value="UniProtKB-UniRule"/>
</dbReference>
<dbReference type="CDD" id="cd06928">
    <property type="entry name" value="RNAP_alpha_NTD"/>
    <property type="match status" value="1"/>
</dbReference>
<dbReference type="FunFam" id="1.10.150.20:FF:000001">
    <property type="entry name" value="DNA-directed RNA polymerase subunit alpha"/>
    <property type="match status" value="1"/>
</dbReference>
<dbReference type="FunFam" id="2.170.120.12:FF:000001">
    <property type="entry name" value="DNA-directed RNA polymerase subunit alpha"/>
    <property type="match status" value="1"/>
</dbReference>
<dbReference type="Gene3D" id="1.10.150.20">
    <property type="entry name" value="5' to 3' exonuclease, C-terminal subdomain"/>
    <property type="match status" value="1"/>
</dbReference>
<dbReference type="Gene3D" id="2.170.120.12">
    <property type="entry name" value="DNA-directed RNA polymerase, insert domain"/>
    <property type="match status" value="1"/>
</dbReference>
<dbReference type="Gene3D" id="3.30.1360.10">
    <property type="entry name" value="RNA polymerase, RBP11-like subunit"/>
    <property type="match status" value="1"/>
</dbReference>
<dbReference type="HAMAP" id="MF_00059">
    <property type="entry name" value="RNApol_bact_RpoA"/>
    <property type="match status" value="1"/>
</dbReference>
<dbReference type="InterPro" id="IPR011262">
    <property type="entry name" value="DNA-dir_RNA_pol_insert"/>
</dbReference>
<dbReference type="InterPro" id="IPR011263">
    <property type="entry name" value="DNA-dir_RNA_pol_RpoA/D/Rpb3"/>
</dbReference>
<dbReference type="InterPro" id="IPR011773">
    <property type="entry name" value="DNA-dir_RpoA"/>
</dbReference>
<dbReference type="InterPro" id="IPR036603">
    <property type="entry name" value="RBP11-like"/>
</dbReference>
<dbReference type="InterPro" id="IPR011260">
    <property type="entry name" value="RNAP_asu_C"/>
</dbReference>
<dbReference type="InterPro" id="IPR036643">
    <property type="entry name" value="RNApol_insert_sf"/>
</dbReference>
<dbReference type="NCBIfam" id="NF003513">
    <property type="entry name" value="PRK05182.1-2"/>
    <property type="match status" value="1"/>
</dbReference>
<dbReference type="NCBIfam" id="NF003519">
    <property type="entry name" value="PRK05182.2-5"/>
    <property type="match status" value="1"/>
</dbReference>
<dbReference type="NCBIfam" id="TIGR02027">
    <property type="entry name" value="rpoA"/>
    <property type="match status" value="1"/>
</dbReference>
<dbReference type="Pfam" id="PF01000">
    <property type="entry name" value="RNA_pol_A_bac"/>
    <property type="match status" value="1"/>
</dbReference>
<dbReference type="Pfam" id="PF03118">
    <property type="entry name" value="RNA_pol_A_CTD"/>
    <property type="match status" value="1"/>
</dbReference>
<dbReference type="Pfam" id="PF01193">
    <property type="entry name" value="RNA_pol_L"/>
    <property type="match status" value="1"/>
</dbReference>
<dbReference type="SMART" id="SM00662">
    <property type="entry name" value="RPOLD"/>
    <property type="match status" value="1"/>
</dbReference>
<dbReference type="SUPFAM" id="SSF47789">
    <property type="entry name" value="C-terminal domain of RNA polymerase alpha subunit"/>
    <property type="match status" value="1"/>
</dbReference>
<dbReference type="SUPFAM" id="SSF56553">
    <property type="entry name" value="Insert subdomain of RNA polymerase alpha subunit"/>
    <property type="match status" value="1"/>
</dbReference>
<dbReference type="SUPFAM" id="SSF55257">
    <property type="entry name" value="RBP11-like subunits of RNA polymerase"/>
    <property type="match status" value="1"/>
</dbReference>
<protein>
    <recommendedName>
        <fullName evidence="1">DNA-directed RNA polymerase subunit alpha</fullName>
        <shortName evidence="1">RNAP subunit alpha</shortName>
        <ecNumber evidence="1">2.7.7.6</ecNumber>
    </recommendedName>
    <alternativeName>
        <fullName evidence="1">RNA polymerase subunit alpha</fullName>
    </alternativeName>
    <alternativeName>
        <fullName evidence="1">Transcriptase subunit alpha</fullName>
    </alternativeName>
</protein>
<reference key="1">
    <citation type="journal article" date="2009" name="Environ. Microbiol.">
        <title>Contribution of mobile genetic elements to Desulfovibrio vulgaris genome plasticity.</title>
        <authorList>
            <person name="Walker C.B."/>
            <person name="Stolyar S."/>
            <person name="Chivian D."/>
            <person name="Pinel N."/>
            <person name="Gabster J.A."/>
            <person name="Dehal P.S."/>
            <person name="He Z."/>
            <person name="Yang Z.K."/>
            <person name="Yen H.C."/>
            <person name="Zhou J."/>
            <person name="Wall J.D."/>
            <person name="Hazen T.C."/>
            <person name="Arkin A.P."/>
            <person name="Stahl D.A."/>
        </authorList>
    </citation>
    <scope>NUCLEOTIDE SEQUENCE [LARGE SCALE GENOMIC DNA]</scope>
    <source>
        <strain>DP4</strain>
    </source>
</reference>
<name>RPOA_NITV4</name>
<organism>
    <name type="scientific">Nitratidesulfovibrio vulgaris (strain DP4)</name>
    <name type="common">Desulfovibrio vulgaris</name>
    <dbReference type="NCBI Taxonomy" id="391774"/>
    <lineage>
        <taxon>Bacteria</taxon>
        <taxon>Pseudomonadati</taxon>
        <taxon>Thermodesulfobacteriota</taxon>
        <taxon>Desulfovibrionia</taxon>
        <taxon>Desulfovibrionales</taxon>
        <taxon>Desulfovibrionaceae</taxon>
        <taxon>Nitratidesulfovibrio</taxon>
    </lineage>
</organism>
<gene>
    <name evidence="1" type="primary">rpoA</name>
    <name type="ordered locus">Dvul_1739</name>
</gene>
<evidence type="ECO:0000255" key="1">
    <source>
        <dbReference type="HAMAP-Rule" id="MF_00059"/>
    </source>
</evidence>
<accession>A1VE90</accession>
<proteinExistence type="inferred from homology"/>
<feature type="chain" id="PRO_0000296798" description="DNA-directed RNA polymerase subunit alpha">
    <location>
        <begin position="1"/>
        <end position="347"/>
    </location>
</feature>
<feature type="region of interest" description="Alpha N-terminal domain (alpha-NTD)" evidence="1">
    <location>
        <begin position="1"/>
        <end position="243"/>
    </location>
</feature>
<feature type="region of interest" description="Alpha C-terminal domain (alpha-CTD)" evidence="1">
    <location>
        <begin position="260"/>
        <end position="347"/>
    </location>
</feature>